<proteinExistence type="inferred from homology"/>
<evidence type="ECO:0000255" key="1">
    <source>
        <dbReference type="HAMAP-Rule" id="MF_00374"/>
    </source>
</evidence>
<evidence type="ECO:0000305" key="2"/>
<keyword id="KW-0687">Ribonucleoprotein</keyword>
<keyword id="KW-0689">Ribosomal protein</keyword>
<sequence>MKAKELREKSVEELNTELLNLLREQFNLRMQAASGQLQQSHLLKQVRRDVARVKTLLNEKAGA</sequence>
<protein>
    <recommendedName>
        <fullName evidence="1">Large ribosomal subunit protein uL29</fullName>
    </recommendedName>
    <alternativeName>
        <fullName evidence="2">50S ribosomal protein L29</fullName>
    </alternativeName>
</protein>
<accession>Q0TCE9</accession>
<feature type="chain" id="PRO_1000007476" description="Large ribosomal subunit protein uL29">
    <location>
        <begin position="1"/>
        <end position="63"/>
    </location>
</feature>
<comment type="similarity">
    <text evidence="1">Belongs to the universal ribosomal protein uL29 family.</text>
</comment>
<organism>
    <name type="scientific">Escherichia coli O6:K15:H31 (strain 536 / UPEC)</name>
    <dbReference type="NCBI Taxonomy" id="362663"/>
    <lineage>
        <taxon>Bacteria</taxon>
        <taxon>Pseudomonadati</taxon>
        <taxon>Pseudomonadota</taxon>
        <taxon>Gammaproteobacteria</taxon>
        <taxon>Enterobacterales</taxon>
        <taxon>Enterobacteriaceae</taxon>
        <taxon>Escherichia</taxon>
    </lineage>
</organism>
<reference key="1">
    <citation type="journal article" date="2006" name="Mol. Microbiol.">
        <title>Role of pathogenicity island-associated integrases in the genome plasticity of uropathogenic Escherichia coli strain 536.</title>
        <authorList>
            <person name="Hochhut B."/>
            <person name="Wilde C."/>
            <person name="Balling G."/>
            <person name="Middendorf B."/>
            <person name="Dobrindt U."/>
            <person name="Brzuszkiewicz E."/>
            <person name="Gottschalk G."/>
            <person name="Carniel E."/>
            <person name="Hacker J."/>
        </authorList>
    </citation>
    <scope>NUCLEOTIDE SEQUENCE [LARGE SCALE GENOMIC DNA]</scope>
    <source>
        <strain>536 / UPEC</strain>
    </source>
</reference>
<dbReference type="EMBL" id="CP000247">
    <property type="protein sequence ID" value="ABG71380.1"/>
    <property type="molecule type" value="Genomic_DNA"/>
</dbReference>
<dbReference type="RefSeq" id="WP_000644741.1">
    <property type="nucleotide sequence ID" value="NC_008253.1"/>
</dbReference>
<dbReference type="SMR" id="Q0TCE9"/>
<dbReference type="GeneID" id="93778675"/>
<dbReference type="KEGG" id="ecp:ECP_3400"/>
<dbReference type="HOGENOM" id="CLU_158491_1_2_6"/>
<dbReference type="Proteomes" id="UP000009182">
    <property type="component" value="Chromosome"/>
</dbReference>
<dbReference type="GO" id="GO:0022625">
    <property type="term" value="C:cytosolic large ribosomal subunit"/>
    <property type="evidence" value="ECO:0007669"/>
    <property type="project" value="TreeGrafter"/>
</dbReference>
<dbReference type="GO" id="GO:0003735">
    <property type="term" value="F:structural constituent of ribosome"/>
    <property type="evidence" value="ECO:0007669"/>
    <property type="project" value="InterPro"/>
</dbReference>
<dbReference type="GO" id="GO:0006412">
    <property type="term" value="P:translation"/>
    <property type="evidence" value="ECO:0007669"/>
    <property type="project" value="UniProtKB-UniRule"/>
</dbReference>
<dbReference type="CDD" id="cd00427">
    <property type="entry name" value="Ribosomal_L29_HIP"/>
    <property type="match status" value="1"/>
</dbReference>
<dbReference type="Gene3D" id="6.10.140.1970">
    <property type="match status" value="1"/>
</dbReference>
<dbReference type="HAMAP" id="MF_00374">
    <property type="entry name" value="Ribosomal_uL29"/>
    <property type="match status" value="1"/>
</dbReference>
<dbReference type="InterPro" id="IPR050063">
    <property type="entry name" value="Ribosomal_protein_uL29"/>
</dbReference>
<dbReference type="InterPro" id="IPR001854">
    <property type="entry name" value="Ribosomal_uL29"/>
</dbReference>
<dbReference type="InterPro" id="IPR018254">
    <property type="entry name" value="Ribosomal_uL29_CS"/>
</dbReference>
<dbReference type="InterPro" id="IPR036049">
    <property type="entry name" value="Ribosomal_uL29_sf"/>
</dbReference>
<dbReference type="NCBIfam" id="TIGR00012">
    <property type="entry name" value="L29"/>
    <property type="match status" value="1"/>
</dbReference>
<dbReference type="PANTHER" id="PTHR10916">
    <property type="entry name" value="60S RIBOSOMAL PROTEIN L35/50S RIBOSOMAL PROTEIN L29"/>
    <property type="match status" value="1"/>
</dbReference>
<dbReference type="PANTHER" id="PTHR10916:SF0">
    <property type="entry name" value="LARGE RIBOSOMAL SUBUNIT PROTEIN UL29C"/>
    <property type="match status" value="1"/>
</dbReference>
<dbReference type="Pfam" id="PF00831">
    <property type="entry name" value="Ribosomal_L29"/>
    <property type="match status" value="1"/>
</dbReference>
<dbReference type="SUPFAM" id="SSF46561">
    <property type="entry name" value="Ribosomal protein L29 (L29p)"/>
    <property type="match status" value="1"/>
</dbReference>
<dbReference type="PROSITE" id="PS00579">
    <property type="entry name" value="RIBOSOMAL_L29"/>
    <property type="match status" value="1"/>
</dbReference>
<gene>
    <name evidence="1" type="primary">rpmC</name>
    <name type="ordered locus">ECP_3400</name>
</gene>
<name>RL29_ECOL5</name>